<accession>A7ZAY0</accession>
<dbReference type="EMBL" id="CP000792">
    <property type="protein sequence ID" value="EAT99173.1"/>
    <property type="molecule type" value="Genomic_DNA"/>
</dbReference>
<dbReference type="RefSeq" id="WP_009295119.1">
    <property type="nucleotide sequence ID" value="NC_009802.2"/>
</dbReference>
<dbReference type="SMR" id="A7ZAY0"/>
<dbReference type="STRING" id="360104.CCC13826_1840"/>
<dbReference type="KEGG" id="cco:CCC13826_1840"/>
<dbReference type="eggNOG" id="COG0292">
    <property type="taxonomic scope" value="Bacteria"/>
</dbReference>
<dbReference type="HOGENOM" id="CLU_123265_0_1_7"/>
<dbReference type="OrthoDB" id="9808966at2"/>
<dbReference type="Proteomes" id="UP000001121">
    <property type="component" value="Chromosome"/>
</dbReference>
<dbReference type="GO" id="GO:1990904">
    <property type="term" value="C:ribonucleoprotein complex"/>
    <property type="evidence" value="ECO:0007669"/>
    <property type="project" value="UniProtKB-KW"/>
</dbReference>
<dbReference type="GO" id="GO:0005840">
    <property type="term" value="C:ribosome"/>
    <property type="evidence" value="ECO:0007669"/>
    <property type="project" value="UniProtKB-KW"/>
</dbReference>
<dbReference type="GO" id="GO:0019843">
    <property type="term" value="F:rRNA binding"/>
    <property type="evidence" value="ECO:0007669"/>
    <property type="project" value="UniProtKB-UniRule"/>
</dbReference>
<dbReference type="GO" id="GO:0003735">
    <property type="term" value="F:structural constituent of ribosome"/>
    <property type="evidence" value="ECO:0007669"/>
    <property type="project" value="InterPro"/>
</dbReference>
<dbReference type="GO" id="GO:0000027">
    <property type="term" value="P:ribosomal large subunit assembly"/>
    <property type="evidence" value="ECO:0007669"/>
    <property type="project" value="UniProtKB-UniRule"/>
</dbReference>
<dbReference type="GO" id="GO:0006412">
    <property type="term" value="P:translation"/>
    <property type="evidence" value="ECO:0007669"/>
    <property type="project" value="InterPro"/>
</dbReference>
<dbReference type="CDD" id="cd07026">
    <property type="entry name" value="Ribosomal_L20"/>
    <property type="match status" value="1"/>
</dbReference>
<dbReference type="FunFam" id="1.10.1900.20:FF:000001">
    <property type="entry name" value="50S ribosomal protein L20"/>
    <property type="match status" value="1"/>
</dbReference>
<dbReference type="Gene3D" id="6.10.160.10">
    <property type="match status" value="1"/>
</dbReference>
<dbReference type="Gene3D" id="1.10.1900.20">
    <property type="entry name" value="Ribosomal protein L20"/>
    <property type="match status" value="1"/>
</dbReference>
<dbReference type="HAMAP" id="MF_00382">
    <property type="entry name" value="Ribosomal_bL20"/>
    <property type="match status" value="1"/>
</dbReference>
<dbReference type="InterPro" id="IPR005813">
    <property type="entry name" value="Ribosomal_bL20"/>
</dbReference>
<dbReference type="InterPro" id="IPR049946">
    <property type="entry name" value="RIBOSOMAL_L20_CS"/>
</dbReference>
<dbReference type="InterPro" id="IPR035566">
    <property type="entry name" value="Ribosomal_protein_bL20_C"/>
</dbReference>
<dbReference type="NCBIfam" id="TIGR01032">
    <property type="entry name" value="rplT_bact"/>
    <property type="match status" value="1"/>
</dbReference>
<dbReference type="PANTHER" id="PTHR10986">
    <property type="entry name" value="39S RIBOSOMAL PROTEIN L20"/>
    <property type="match status" value="1"/>
</dbReference>
<dbReference type="Pfam" id="PF00453">
    <property type="entry name" value="Ribosomal_L20"/>
    <property type="match status" value="1"/>
</dbReference>
<dbReference type="PRINTS" id="PR00062">
    <property type="entry name" value="RIBOSOMALL20"/>
</dbReference>
<dbReference type="SUPFAM" id="SSF74731">
    <property type="entry name" value="Ribosomal protein L20"/>
    <property type="match status" value="1"/>
</dbReference>
<dbReference type="PROSITE" id="PS00937">
    <property type="entry name" value="RIBOSOMAL_L20"/>
    <property type="match status" value="1"/>
</dbReference>
<reference key="1">
    <citation type="submission" date="2007-10" db="EMBL/GenBank/DDBJ databases">
        <title>Genome sequence of Campylobacter concisus 13826 isolated from human feces.</title>
        <authorList>
            <person name="Fouts D.E."/>
            <person name="Mongodin E.F."/>
            <person name="Puiu D."/>
            <person name="Sebastian Y."/>
            <person name="Miller W.G."/>
            <person name="Mandrell R.E."/>
            <person name="On S."/>
            <person name="Nelson K.E."/>
        </authorList>
    </citation>
    <scope>NUCLEOTIDE SEQUENCE [LARGE SCALE GENOMIC DNA]</scope>
    <source>
        <strain>13826</strain>
    </source>
</reference>
<gene>
    <name evidence="1" type="primary">rplT</name>
    <name type="ordered locus">Ccon26_00140</name>
    <name type="ORF">CCC13826_1840</name>
</gene>
<name>RL20_CAMC1</name>
<proteinExistence type="inferred from homology"/>
<comment type="function">
    <text evidence="1">Binds directly to 23S ribosomal RNA and is necessary for the in vitro assembly process of the 50S ribosomal subunit. It is not involved in the protein synthesizing functions of that subunit.</text>
</comment>
<comment type="similarity">
    <text evidence="1">Belongs to the bacterial ribosomal protein bL20 family.</text>
</comment>
<feature type="chain" id="PRO_1000048947" description="Large ribosomal subunit protein bL20">
    <location>
        <begin position="1"/>
        <end position="118"/>
    </location>
</feature>
<keyword id="KW-0687">Ribonucleoprotein</keyword>
<keyword id="KW-0689">Ribosomal protein</keyword>
<keyword id="KW-0694">RNA-binding</keyword>
<keyword id="KW-0699">rRNA-binding</keyword>
<sequence>MARVKTGVVRRRRHKKVLKLARGFFSARHKHFRKAKEQLERSLVYAYRDRRQKKRDFRRLWIVRINAACRLNDISYSRFINGLNKANIELDRKILADLAMNDAKAFAALAKQAKDALK</sequence>
<evidence type="ECO:0000255" key="1">
    <source>
        <dbReference type="HAMAP-Rule" id="MF_00382"/>
    </source>
</evidence>
<evidence type="ECO:0000305" key="2"/>
<protein>
    <recommendedName>
        <fullName evidence="1">Large ribosomal subunit protein bL20</fullName>
    </recommendedName>
    <alternativeName>
        <fullName evidence="2">50S ribosomal protein L20</fullName>
    </alternativeName>
</protein>
<organism>
    <name type="scientific">Campylobacter concisus (strain 13826)</name>
    <dbReference type="NCBI Taxonomy" id="360104"/>
    <lineage>
        <taxon>Bacteria</taxon>
        <taxon>Pseudomonadati</taxon>
        <taxon>Campylobacterota</taxon>
        <taxon>Epsilonproteobacteria</taxon>
        <taxon>Campylobacterales</taxon>
        <taxon>Campylobacteraceae</taxon>
        <taxon>Campylobacter</taxon>
    </lineage>
</organism>